<dbReference type="EMBL" id="AF151102">
    <property type="protein sequence ID" value="AAD40021.1"/>
    <property type="molecule type" value="Genomic_DNA"/>
</dbReference>
<dbReference type="EMBL" id="ADBJ01000056">
    <property type="protein sequence ID" value="EFA75257.1"/>
    <property type="status" value="ALT_SEQ"/>
    <property type="molecule type" value="Genomic_DNA"/>
</dbReference>
<dbReference type="SMR" id="Q9Y0T3"/>
<dbReference type="FunCoup" id="Q9Y0T3">
    <property type="interactions" value="3"/>
</dbReference>
<dbReference type="STRING" id="670386.Q9Y0T3"/>
<dbReference type="InParanoid" id="Q9Y0T3"/>
<dbReference type="Proteomes" id="UP000001396">
    <property type="component" value="Unassembled WGS sequence"/>
</dbReference>
<dbReference type="GO" id="GO:0005737">
    <property type="term" value="C:cytoplasm"/>
    <property type="evidence" value="ECO:0007669"/>
    <property type="project" value="UniProtKB-KW"/>
</dbReference>
<dbReference type="GO" id="GO:0005856">
    <property type="term" value="C:cytoskeleton"/>
    <property type="evidence" value="ECO:0007669"/>
    <property type="project" value="UniProtKB-SubCell"/>
</dbReference>
<dbReference type="GO" id="GO:0003779">
    <property type="term" value="F:actin binding"/>
    <property type="evidence" value="ECO:0007669"/>
    <property type="project" value="UniProtKB-KW"/>
</dbReference>
<dbReference type="CDD" id="cd21225">
    <property type="entry name" value="CH_CTX_rpt1"/>
    <property type="match status" value="1"/>
</dbReference>
<dbReference type="FunFam" id="1.10.418.10:FF:000138">
    <property type="entry name" value="Cortexillin I"/>
    <property type="match status" value="1"/>
</dbReference>
<dbReference type="Gene3D" id="1.20.5.340">
    <property type="match status" value="1"/>
</dbReference>
<dbReference type="Gene3D" id="1.10.418.10">
    <property type="entry name" value="Calponin-like domain"/>
    <property type="match status" value="2"/>
</dbReference>
<dbReference type="InterPro" id="IPR001715">
    <property type="entry name" value="CH_dom"/>
</dbReference>
<dbReference type="InterPro" id="IPR036872">
    <property type="entry name" value="CH_dom_sf"/>
</dbReference>
<dbReference type="InterPro" id="IPR015383">
    <property type="entry name" value="Cortexillin-I_coiled-coil"/>
</dbReference>
<dbReference type="PANTHER" id="PTHR11915">
    <property type="entry name" value="SPECTRIN/FILAMIN RELATED CYTOSKELETAL PROTEIN"/>
    <property type="match status" value="1"/>
</dbReference>
<dbReference type="Pfam" id="PF00307">
    <property type="entry name" value="CH"/>
    <property type="match status" value="2"/>
</dbReference>
<dbReference type="Pfam" id="PF09304">
    <property type="entry name" value="Cortex-I_coil"/>
    <property type="match status" value="1"/>
</dbReference>
<dbReference type="SMART" id="SM00033">
    <property type="entry name" value="CH"/>
    <property type="match status" value="2"/>
</dbReference>
<dbReference type="SUPFAM" id="SSF47576">
    <property type="entry name" value="Calponin-homology domain, CH-domain"/>
    <property type="match status" value="1"/>
</dbReference>
<dbReference type="SUPFAM" id="SSF58018">
    <property type="entry name" value="Coiled-coil dimerization domain from cortexillin I"/>
    <property type="match status" value="1"/>
</dbReference>
<dbReference type="PROSITE" id="PS50021">
    <property type="entry name" value="CH"/>
    <property type="match status" value="2"/>
</dbReference>
<accession>Q9Y0T3</accession>
<accession>D3BT40</accession>
<feature type="chain" id="PRO_0000312779" description="Cortexillin-2">
    <location>
        <begin position="1"/>
        <end position="449"/>
    </location>
</feature>
<feature type="domain" description="Calponin-homology (CH) 1" evidence="3">
    <location>
        <begin position="10"/>
        <end position="119"/>
    </location>
</feature>
<feature type="domain" description="Calponin-homology (CH) 2" evidence="3">
    <location>
        <begin position="128"/>
        <end position="233"/>
    </location>
</feature>
<feature type="region of interest" description="Actin-binding">
    <location>
        <begin position="1"/>
        <end position="231"/>
    </location>
</feature>
<feature type="coiled-coil region" evidence="2">
    <location>
        <begin position="232"/>
        <end position="364"/>
    </location>
</feature>
<feature type="coiled-coil region" evidence="2">
    <location>
        <begin position="408"/>
        <end position="441"/>
    </location>
</feature>
<comment type="function">
    <text evidence="1">Actin-bundling protein. When linked to F-actin the actin filaments form preferentially anti-parallel bundles that associate into meshworks. Plays a major role in cytokinesis (By similarity).</text>
</comment>
<comment type="subunit">
    <text evidence="1">Homodimer; parallel.</text>
</comment>
<comment type="subcellular location">
    <subcellularLocation>
        <location evidence="1">Cytoplasm</location>
        <location evidence="1">Cytoskeleton</location>
    </subcellularLocation>
</comment>
<comment type="similarity">
    <text evidence="4">Belongs to the cortexillin family.</text>
</comment>
<comment type="sequence caution" evidence="4">
    <conflict type="erroneous gene model prediction">
        <sequence resource="EMBL-CDS" id="EFA75257"/>
    </conflict>
</comment>
<protein>
    <recommendedName>
        <fullName>Cortexillin-2</fullName>
    </recommendedName>
    <alternativeName>
        <fullName>Cortexillin II</fullName>
    </alternativeName>
</protein>
<sequence length="449" mass="51168">MTDLHKEWEKVQEMAFASWVNSVLEKRGGVEKISDVSTDLSDGVKLIFFLESVSGKKFPKKFDLEPKTRILRIQNLHLAMLFVDEDLKVKVQGVAAEEFVDNNKKMILGFLWTLYRKYRISVINEGDKSSEEGLLAWVKKTTDGYSGVNITNFKASFRDGNAYLALAHKFDPSVFKYDEFSGKDQIERLNAAFDFAEKGLGIPKLLDAESLSKGNVDERSIILYTSLFFHAYRAKEEREALEASQNSLANKLASLEQSLEGEKTSQDELARQKKELEESLRLIRQQNEQRNQRIADIQSKIDDALRGIDDEKMAKLDLESRLSKTEKDKAILELKLAETLDENERLRNKIEEDKKRAAAEAEGLGLLRTHIGHQITDIAKWQSFLDNPEAVPYTKTPVNLEAELASLQFEEQAKRLGSKVENENISLEKYLSLKEEELKSAGAPKKRTK</sequence>
<proteinExistence type="inferred from homology"/>
<organism>
    <name type="scientific">Heterostelium pallidum (strain ATCC 26659 / Pp 5 / PN500)</name>
    <name type="common">Cellular slime mold</name>
    <name type="synonym">Polysphondylium pallidum</name>
    <dbReference type="NCBI Taxonomy" id="670386"/>
    <lineage>
        <taxon>Eukaryota</taxon>
        <taxon>Amoebozoa</taxon>
        <taxon>Evosea</taxon>
        <taxon>Eumycetozoa</taxon>
        <taxon>Dictyostelia</taxon>
        <taxon>Acytosteliales</taxon>
        <taxon>Acytosteliaceae</taxon>
        <taxon>Heterostelium</taxon>
    </lineage>
</organism>
<evidence type="ECO:0000250" key="1"/>
<evidence type="ECO:0000255" key="2"/>
<evidence type="ECO:0000255" key="3">
    <source>
        <dbReference type="PROSITE-ProRule" id="PRU00044"/>
    </source>
</evidence>
<evidence type="ECO:0000305" key="4"/>
<keyword id="KW-0009">Actin-binding</keyword>
<keyword id="KW-0175">Coiled coil</keyword>
<keyword id="KW-0963">Cytoplasm</keyword>
<keyword id="KW-0206">Cytoskeleton</keyword>
<keyword id="KW-1185">Reference proteome</keyword>
<keyword id="KW-0677">Repeat</keyword>
<gene>
    <name type="primary">ctxB</name>
    <name type="ORF">PPL_11332</name>
</gene>
<name>CTXB_HETP5</name>
<reference key="1">
    <citation type="journal article" date="1999" name="Dev. Biol.">
        <title>Cortexillin I is required for development in Polysphondylium.</title>
        <authorList>
            <person name="Fey P."/>
            <person name="Cox E.C."/>
        </authorList>
    </citation>
    <scope>NUCLEOTIDE SEQUENCE [GENOMIC DNA]</scope>
    <source>
        <strain>ATCC 26659 / Pp 5 / PN500</strain>
    </source>
</reference>
<reference key="2">
    <citation type="journal article" date="2011" name="Genome Res.">
        <title>Phylogeny-wide analysis of social amoeba genomes highlights ancient origins for complex intercellular communication.</title>
        <authorList>
            <person name="Heidel A.J."/>
            <person name="Lawal H.M."/>
            <person name="Felder M."/>
            <person name="Schilde C."/>
            <person name="Helps N.R."/>
            <person name="Tunggal B."/>
            <person name="Rivero F."/>
            <person name="John U."/>
            <person name="Schleicher M."/>
            <person name="Eichinger L."/>
            <person name="Platzer M."/>
            <person name="Noegel A.A."/>
            <person name="Schaap P."/>
            <person name="Gloeckner G."/>
        </authorList>
    </citation>
    <scope>NUCLEOTIDE SEQUENCE [LARGE SCALE GENOMIC DNA]</scope>
    <source>
        <strain>ATCC 26659 / Pp 5 / PN500</strain>
    </source>
</reference>